<evidence type="ECO:0000255" key="1">
    <source>
        <dbReference type="HAMAP-Rule" id="MF_01345"/>
    </source>
</evidence>
<evidence type="ECO:0000305" key="2"/>
<proteinExistence type="inferred from homology"/>
<accession>B7GW11</accession>
<comment type="function">
    <text evidence="1">One of the primary rRNA binding proteins, it binds specifically to the 5'-end of 16S ribosomal RNA.</text>
</comment>
<comment type="subunit">
    <text evidence="1">Part of the 30S ribosomal subunit.</text>
</comment>
<comment type="similarity">
    <text evidence="1">Belongs to the universal ribosomal protein uS17 family.</text>
</comment>
<feature type="chain" id="PRO_1000143207" description="Small ribosomal subunit protein uS17">
    <location>
        <begin position="1"/>
        <end position="85"/>
    </location>
</feature>
<protein>
    <recommendedName>
        <fullName evidence="1">Small ribosomal subunit protein uS17</fullName>
    </recommendedName>
    <alternativeName>
        <fullName evidence="2">30S ribosomal protein S17</fullName>
    </alternativeName>
</protein>
<dbReference type="EMBL" id="CP001172">
    <property type="protein sequence ID" value="ACJ56762.1"/>
    <property type="molecule type" value="Genomic_DNA"/>
</dbReference>
<dbReference type="RefSeq" id="WP_001291845.1">
    <property type="nucleotide sequence ID" value="NZ_CP001172.1"/>
</dbReference>
<dbReference type="SMR" id="B7GW11"/>
<dbReference type="GeneID" id="9380825"/>
<dbReference type="HOGENOM" id="CLU_073626_1_1_6"/>
<dbReference type="Proteomes" id="UP000006924">
    <property type="component" value="Chromosome"/>
</dbReference>
<dbReference type="GO" id="GO:0022627">
    <property type="term" value="C:cytosolic small ribosomal subunit"/>
    <property type="evidence" value="ECO:0007669"/>
    <property type="project" value="TreeGrafter"/>
</dbReference>
<dbReference type="GO" id="GO:0019843">
    <property type="term" value="F:rRNA binding"/>
    <property type="evidence" value="ECO:0007669"/>
    <property type="project" value="UniProtKB-UniRule"/>
</dbReference>
<dbReference type="GO" id="GO:0003735">
    <property type="term" value="F:structural constituent of ribosome"/>
    <property type="evidence" value="ECO:0007669"/>
    <property type="project" value="InterPro"/>
</dbReference>
<dbReference type="GO" id="GO:0006412">
    <property type="term" value="P:translation"/>
    <property type="evidence" value="ECO:0007669"/>
    <property type="project" value="UniProtKB-UniRule"/>
</dbReference>
<dbReference type="CDD" id="cd00364">
    <property type="entry name" value="Ribosomal_uS17"/>
    <property type="match status" value="1"/>
</dbReference>
<dbReference type="FunFam" id="2.40.50.140:FF:000014">
    <property type="entry name" value="30S ribosomal protein S17"/>
    <property type="match status" value="1"/>
</dbReference>
<dbReference type="Gene3D" id="2.40.50.140">
    <property type="entry name" value="Nucleic acid-binding proteins"/>
    <property type="match status" value="1"/>
</dbReference>
<dbReference type="HAMAP" id="MF_01345_B">
    <property type="entry name" value="Ribosomal_uS17_B"/>
    <property type="match status" value="1"/>
</dbReference>
<dbReference type="InterPro" id="IPR012340">
    <property type="entry name" value="NA-bd_OB-fold"/>
</dbReference>
<dbReference type="InterPro" id="IPR000266">
    <property type="entry name" value="Ribosomal_uS17"/>
</dbReference>
<dbReference type="InterPro" id="IPR019984">
    <property type="entry name" value="Ribosomal_uS17_bact/chlr"/>
</dbReference>
<dbReference type="InterPro" id="IPR019979">
    <property type="entry name" value="Ribosomal_uS17_CS"/>
</dbReference>
<dbReference type="NCBIfam" id="NF004123">
    <property type="entry name" value="PRK05610.1"/>
    <property type="match status" value="1"/>
</dbReference>
<dbReference type="NCBIfam" id="TIGR03635">
    <property type="entry name" value="uS17_bact"/>
    <property type="match status" value="1"/>
</dbReference>
<dbReference type="PANTHER" id="PTHR10744">
    <property type="entry name" value="40S RIBOSOMAL PROTEIN S11 FAMILY MEMBER"/>
    <property type="match status" value="1"/>
</dbReference>
<dbReference type="PANTHER" id="PTHR10744:SF1">
    <property type="entry name" value="SMALL RIBOSOMAL SUBUNIT PROTEIN US17M"/>
    <property type="match status" value="1"/>
</dbReference>
<dbReference type="Pfam" id="PF00366">
    <property type="entry name" value="Ribosomal_S17"/>
    <property type="match status" value="1"/>
</dbReference>
<dbReference type="PRINTS" id="PR00973">
    <property type="entry name" value="RIBOSOMALS17"/>
</dbReference>
<dbReference type="SUPFAM" id="SSF50249">
    <property type="entry name" value="Nucleic acid-binding proteins"/>
    <property type="match status" value="1"/>
</dbReference>
<dbReference type="PROSITE" id="PS00056">
    <property type="entry name" value="RIBOSOMAL_S17"/>
    <property type="match status" value="1"/>
</dbReference>
<name>RS17_ACIB3</name>
<organism>
    <name type="scientific">Acinetobacter baumannii (strain AB307-0294)</name>
    <dbReference type="NCBI Taxonomy" id="557600"/>
    <lineage>
        <taxon>Bacteria</taxon>
        <taxon>Pseudomonadati</taxon>
        <taxon>Pseudomonadota</taxon>
        <taxon>Gammaproteobacteria</taxon>
        <taxon>Moraxellales</taxon>
        <taxon>Moraxellaceae</taxon>
        <taxon>Acinetobacter</taxon>
        <taxon>Acinetobacter calcoaceticus/baumannii complex</taxon>
    </lineage>
</organism>
<sequence length="85" mass="9524">MSEKTVRTLTGKVVSDKMDKSIVVLIERRVQHPLYGKSIRRSTKLHAHDENNVAKIGDVVTIKESRPISKTKAWTLVEVVEAAAE</sequence>
<gene>
    <name evidence="1" type="primary">rpsQ</name>
    <name type="ordered locus">ABBFA_000441</name>
</gene>
<reference key="1">
    <citation type="journal article" date="2008" name="J. Bacteriol.">
        <title>Comparative genome sequence analysis of multidrug-resistant Acinetobacter baumannii.</title>
        <authorList>
            <person name="Adams M.D."/>
            <person name="Goglin K."/>
            <person name="Molyneaux N."/>
            <person name="Hujer K.M."/>
            <person name="Lavender H."/>
            <person name="Jamison J.J."/>
            <person name="MacDonald I.J."/>
            <person name="Martin K.M."/>
            <person name="Russo T."/>
            <person name="Campagnari A.A."/>
            <person name="Hujer A.M."/>
            <person name="Bonomo R.A."/>
            <person name="Gill S.R."/>
        </authorList>
    </citation>
    <scope>NUCLEOTIDE SEQUENCE [LARGE SCALE GENOMIC DNA]</scope>
    <source>
        <strain>AB307-0294</strain>
    </source>
</reference>
<keyword id="KW-0687">Ribonucleoprotein</keyword>
<keyword id="KW-0689">Ribosomal protein</keyword>
<keyword id="KW-0694">RNA-binding</keyword>
<keyword id="KW-0699">rRNA-binding</keyword>